<protein>
    <recommendedName>
        <fullName evidence="2">Modulator of smoothened protein</fullName>
    </recommendedName>
    <alternativeName>
        <fullName evidence="1">Attenuator of hedgehog</fullName>
    </alternativeName>
</protein>
<name>MOSMO_DANRE</name>
<proteinExistence type="evidence at transcript level"/>
<gene>
    <name evidence="2" type="primary">mosmob</name>
    <name type="ORF">zgc:153595</name>
</gene>
<dbReference type="EMBL" id="BC122343">
    <property type="protein sequence ID" value="AAI22344.1"/>
    <property type="molecule type" value="mRNA"/>
</dbReference>
<dbReference type="RefSeq" id="NP_001070129.1">
    <property type="nucleotide sequence ID" value="NM_001076661.1"/>
</dbReference>
<dbReference type="SMR" id="Q0D289"/>
<dbReference type="FunCoup" id="Q0D289">
    <property type="interactions" value="82"/>
</dbReference>
<dbReference type="STRING" id="7955.ENSDARP00000052003"/>
<dbReference type="PaxDb" id="7955-ENSDARP00000052003"/>
<dbReference type="GeneID" id="767723"/>
<dbReference type="KEGG" id="dre:767723"/>
<dbReference type="AGR" id="ZFIN:ZDB-GENE-060929-1030"/>
<dbReference type="CTD" id="767723"/>
<dbReference type="ZFIN" id="ZDB-GENE-060929-1030">
    <property type="gene designation" value="mosmob"/>
</dbReference>
<dbReference type="eggNOG" id="ENOG502R4TC">
    <property type="taxonomic scope" value="Eukaryota"/>
</dbReference>
<dbReference type="InParanoid" id="Q0D289"/>
<dbReference type="OrthoDB" id="8768722at2759"/>
<dbReference type="PhylomeDB" id="Q0D289"/>
<dbReference type="PRO" id="PR:Q0D289"/>
<dbReference type="Proteomes" id="UP000000437">
    <property type="component" value="Chromosome 12"/>
</dbReference>
<dbReference type="GO" id="GO:0060170">
    <property type="term" value="C:ciliary membrane"/>
    <property type="evidence" value="ECO:0000250"/>
    <property type="project" value="UniProtKB"/>
</dbReference>
<dbReference type="GO" id="GO:0005794">
    <property type="term" value="C:Golgi apparatus"/>
    <property type="evidence" value="ECO:0000250"/>
    <property type="project" value="UniProtKB"/>
</dbReference>
<dbReference type="GO" id="GO:0005886">
    <property type="term" value="C:plasma membrane"/>
    <property type="evidence" value="ECO:0000250"/>
    <property type="project" value="UniProtKB"/>
</dbReference>
<dbReference type="GO" id="GO:0030154">
    <property type="term" value="P:cell differentiation"/>
    <property type="evidence" value="ECO:0007669"/>
    <property type="project" value="UniProtKB-KW"/>
</dbReference>
<dbReference type="GO" id="GO:1904888">
    <property type="term" value="P:cranial skeletal system development"/>
    <property type="evidence" value="ECO:0000316"/>
    <property type="project" value="ZFIN"/>
</dbReference>
<dbReference type="GO" id="GO:0045879">
    <property type="term" value="P:negative regulation of smoothened signaling pathway"/>
    <property type="evidence" value="ECO:0000250"/>
    <property type="project" value="UniProtKB"/>
</dbReference>
<dbReference type="GO" id="GO:0045664">
    <property type="term" value="P:regulation of neuron differentiation"/>
    <property type="evidence" value="ECO:0000250"/>
    <property type="project" value="UniProtKB"/>
</dbReference>
<dbReference type="GO" id="GO:0031647">
    <property type="term" value="P:regulation of protein stability"/>
    <property type="evidence" value="ECO:0000250"/>
    <property type="project" value="UniProtKB"/>
</dbReference>
<dbReference type="FunFam" id="1.20.140.150:FF:000006">
    <property type="entry name" value="uncharacterized protein C16orf52 homolog"/>
    <property type="match status" value="1"/>
</dbReference>
<dbReference type="Gene3D" id="1.20.140.150">
    <property type="match status" value="1"/>
</dbReference>
<dbReference type="InterPro" id="IPR037663">
    <property type="entry name" value="Mosmo"/>
</dbReference>
<dbReference type="PANTHER" id="PTHR31186">
    <property type="entry name" value="MODULATOR OF SMOOTHENED PROTEIN"/>
    <property type="match status" value="1"/>
</dbReference>
<dbReference type="PANTHER" id="PTHR31186:SF1">
    <property type="entry name" value="MODULATOR OF SMOOTHENED PROTEIN"/>
    <property type="match status" value="1"/>
</dbReference>
<dbReference type="Pfam" id="PF18800">
    <property type="entry name" value="Atthog"/>
    <property type="match status" value="1"/>
</dbReference>
<accession>Q0D289</accession>
<sequence>MDKLTIISGCLFLAADIFAIASIANPDWINTGGQEGALTVGLVKQCQTIHGRNRICVSPSLPPEWVTTLFFIILGIVSLTITCGLLVISHWRREATKYARWIAFMGMVLFCMAALIFPVGFYINQVGGQPYKLPNNTVVGSSYVLFVLSIFFTIVGLLFAGKVCLPG</sequence>
<keyword id="KW-1003">Cell membrane</keyword>
<keyword id="KW-0966">Cell projection</keyword>
<keyword id="KW-0221">Differentiation</keyword>
<keyword id="KW-0472">Membrane</keyword>
<keyword id="KW-1185">Reference proteome</keyword>
<keyword id="KW-0812">Transmembrane</keyword>
<keyword id="KW-1133">Transmembrane helix</keyword>
<feature type="chain" id="PRO_0000271084" description="Modulator of smoothened protein">
    <location>
        <begin position="1"/>
        <end position="167"/>
    </location>
</feature>
<feature type="transmembrane region" description="Helical" evidence="3">
    <location>
        <begin position="7"/>
        <end position="29"/>
    </location>
</feature>
<feature type="transmembrane region" description="Helical" evidence="3">
    <location>
        <begin position="68"/>
        <end position="88"/>
    </location>
</feature>
<feature type="transmembrane region" description="Helical" evidence="3">
    <location>
        <begin position="101"/>
        <end position="121"/>
    </location>
</feature>
<feature type="transmembrane region" description="Helical" evidence="3">
    <location>
        <begin position="139"/>
        <end position="159"/>
    </location>
</feature>
<comment type="function">
    <text evidence="1">Acts as a negative regulator of hedgehog signaling probably by promoting internalization and subsequent degradation of smoothened protein (SMO) present in the ciliary membrane. Plays a role in sonic hedgehog (SHH)-induced spinal neural progenitor cells differentiation.</text>
</comment>
<comment type="subcellular location">
    <subcellularLocation>
        <location>Cell projection</location>
        <location>Cilium membrane</location>
        <topology evidence="1">Multi-pass membrane protein</topology>
    </subcellularLocation>
    <subcellularLocation>
        <location>Cell membrane</location>
        <topology evidence="1">Multi-pass membrane protein</topology>
    </subcellularLocation>
</comment>
<organism>
    <name type="scientific">Danio rerio</name>
    <name type="common">Zebrafish</name>
    <name type="synonym">Brachydanio rerio</name>
    <dbReference type="NCBI Taxonomy" id="7955"/>
    <lineage>
        <taxon>Eukaryota</taxon>
        <taxon>Metazoa</taxon>
        <taxon>Chordata</taxon>
        <taxon>Craniata</taxon>
        <taxon>Vertebrata</taxon>
        <taxon>Euteleostomi</taxon>
        <taxon>Actinopterygii</taxon>
        <taxon>Neopterygii</taxon>
        <taxon>Teleostei</taxon>
        <taxon>Ostariophysi</taxon>
        <taxon>Cypriniformes</taxon>
        <taxon>Danionidae</taxon>
        <taxon>Danioninae</taxon>
        <taxon>Danio</taxon>
    </lineage>
</organism>
<reference key="1">
    <citation type="submission" date="2006-08" db="EMBL/GenBank/DDBJ databases">
        <authorList>
            <consortium name="NIH - Zebrafish Gene Collection (ZGC) project"/>
        </authorList>
    </citation>
    <scope>NUCLEOTIDE SEQUENCE [LARGE SCALE MRNA]</scope>
    <source>
        <tissue>Larva</tissue>
    </source>
</reference>
<evidence type="ECO:0000250" key="1">
    <source>
        <dbReference type="UniProtKB" id="Q8C784"/>
    </source>
</evidence>
<evidence type="ECO:0000250" key="2">
    <source>
        <dbReference type="UniProtKB" id="Q8NHV5"/>
    </source>
</evidence>
<evidence type="ECO:0000255" key="3"/>